<comment type="function">
    <text evidence="2">GTP hydrolase that promotes the GTP-dependent binding of aminoacyl-tRNA to the A-site of ribosomes during protein biosynthesis.</text>
</comment>
<comment type="catalytic activity">
    <reaction evidence="2">
        <text>GTP + H2O = GDP + phosphate + H(+)</text>
        <dbReference type="Rhea" id="RHEA:19669"/>
        <dbReference type="ChEBI" id="CHEBI:15377"/>
        <dbReference type="ChEBI" id="CHEBI:15378"/>
        <dbReference type="ChEBI" id="CHEBI:37565"/>
        <dbReference type="ChEBI" id="CHEBI:43474"/>
        <dbReference type="ChEBI" id="CHEBI:58189"/>
        <dbReference type="EC" id="3.6.5.3"/>
    </reaction>
    <physiologicalReaction direction="left-to-right" evidence="2">
        <dbReference type="Rhea" id="RHEA:19670"/>
    </physiologicalReaction>
</comment>
<comment type="subunit">
    <text evidence="2">Monomer.</text>
</comment>
<comment type="subcellular location">
    <subcellularLocation>
        <location evidence="2">Cytoplasm</location>
    </subcellularLocation>
</comment>
<comment type="similarity">
    <text evidence="2">Belongs to the TRAFAC class translation factor GTPase superfamily. Classic translation factor GTPase family. EF-Tu/EF-1A subfamily.</text>
</comment>
<gene>
    <name evidence="2" type="primary">tuf</name>
    <name type="ordered locus">Cgl0497</name>
    <name type="ordered locus">cg0587</name>
</gene>
<reference key="1">
    <citation type="journal article" date="1993" name="Antonie Van Leeuwenhoek">
        <title>Phylogenetic relationships of Bacteria based on comparative sequence analysis of elongation factor Tu and ATP-synthase beta-subunit genes.</title>
        <authorList>
            <person name="Ludwig W."/>
            <person name="Neumaier J."/>
            <person name="Klugbauer N."/>
            <person name="Brockmann E."/>
            <person name="Roller C."/>
            <person name="Klugbauer S."/>
            <person name="Reetz K."/>
            <person name="Schachtner I."/>
            <person name="Ludvigsen A."/>
            <person name="Bachleitner M."/>
            <person name="Fischer U."/>
            <person name="Schleifer K.H."/>
        </authorList>
    </citation>
    <scope>NUCLEOTIDE SEQUENCE [GENOMIC DNA]</scope>
    <source>
        <strain>ATCC 13059 / LMG 3658 / NCIB 10332 / AS019 / 613</strain>
    </source>
</reference>
<reference key="2">
    <citation type="journal article" date="2003" name="Appl. Microbiol. Biotechnol.">
        <title>The Corynebacterium glutamicum genome: features and impacts on biotechnological processes.</title>
        <authorList>
            <person name="Ikeda M."/>
            <person name="Nakagawa S."/>
        </authorList>
    </citation>
    <scope>NUCLEOTIDE SEQUENCE [LARGE SCALE GENOMIC DNA]</scope>
    <source>
        <strain>ATCC 13032 / DSM 20300 / JCM 1318 / BCRC 11384 / CCUG 27702 / LMG 3730 / NBRC 12168 / NCIMB 10025 / NRRL B-2784 / 534</strain>
    </source>
</reference>
<reference key="3">
    <citation type="journal article" date="2003" name="J. Biotechnol.">
        <title>The complete Corynebacterium glutamicum ATCC 13032 genome sequence and its impact on the production of L-aspartate-derived amino acids and vitamins.</title>
        <authorList>
            <person name="Kalinowski J."/>
            <person name="Bathe B."/>
            <person name="Bartels D."/>
            <person name="Bischoff N."/>
            <person name="Bott M."/>
            <person name="Burkovski A."/>
            <person name="Dusch N."/>
            <person name="Eggeling L."/>
            <person name="Eikmanns B.J."/>
            <person name="Gaigalat L."/>
            <person name="Goesmann A."/>
            <person name="Hartmann M."/>
            <person name="Huthmacher K."/>
            <person name="Kraemer R."/>
            <person name="Linke B."/>
            <person name="McHardy A.C."/>
            <person name="Meyer F."/>
            <person name="Moeckel B."/>
            <person name="Pfefferle W."/>
            <person name="Puehler A."/>
            <person name="Rey D.A."/>
            <person name="Rueckert C."/>
            <person name="Rupp O."/>
            <person name="Sahm H."/>
            <person name="Wendisch V.F."/>
            <person name="Wiegraebe I."/>
            <person name="Tauch A."/>
        </authorList>
    </citation>
    <scope>NUCLEOTIDE SEQUENCE [LARGE SCALE GENOMIC DNA]</scope>
    <source>
        <strain>ATCC 13032 / DSM 20300 / JCM 1318 / BCRC 11384 / CCUG 27702 / LMG 3730 / NBRC 12168 / NCIMB 10025 / NRRL B-2784 / 534</strain>
    </source>
</reference>
<feature type="chain" id="PRO_0000091316" description="Elongation factor Tu">
    <location>
        <begin position="1"/>
        <end position="396"/>
    </location>
</feature>
<feature type="domain" description="tr-type G">
    <location>
        <begin position="10"/>
        <end position="205"/>
    </location>
</feature>
<feature type="region of interest" description="G1" evidence="1">
    <location>
        <begin position="19"/>
        <end position="26"/>
    </location>
</feature>
<feature type="region of interest" description="G2" evidence="1">
    <location>
        <begin position="62"/>
        <end position="66"/>
    </location>
</feature>
<feature type="region of interest" description="G3" evidence="1">
    <location>
        <begin position="83"/>
        <end position="86"/>
    </location>
</feature>
<feature type="region of interest" description="G4" evidence="1">
    <location>
        <begin position="138"/>
        <end position="141"/>
    </location>
</feature>
<feature type="region of interest" description="G5" evidence="1">
    <location>
        <begin position="175"/>
        <end position="177"/>
    </location>
</feature>
<feature type="binding site" evidence="2">
    <location>
        <begin position="19"/>
        <end position="26"/>
    </location>
    <ligand>
        <name>GTP</name>
        <dbReference type="ChEBI" id="CHEBI:37565"/>
    </ligand>
</feature>
<feature type="binding site" evidence="2">
    <location>
        <position position="26"/>
    </location>
    <ligand>
        <name>Mg(2+)</name>
        <dbReference type="ChEBI" id="CHEBI:18420"/>
    </ligand>
</feature>
<feature type="binding site" evidence="2">
    <location>
        <begin position="83"/>
        <end position="87"/>
    </location>
    <ligand>
        <name>GTP</name>
        <dbReference type="ChEBI" id="CHEBI:37565"/>
    </ligand>
</feature>
<feature type="binding site" evidence="2">
    <location>
        <begin position="138"/>
        <end position="141"/>
    </location>
    <ligand>
        <name>GTP</name>
        <dbReference type="ChEBI" id="CHEBI:37565"/>
    </ligand>
</feature>
<dbReference type="EC" id="3.6.5.3" evidence="2"/>
<dbReference type="EMBL" id="X77034">
    <property type="protein sequence ID" value="CAA54323.1"/>
    <property type="molecule type" value="Genomic_DNA"/>
</dbReference>
<dbReference type="EMBL" id="BA000036">
    <property type="protein sequence ID" value="BAB97890.1"/>
    <property type="molecule type" value="Genomic_DNA"/>
</dbReference>
<dbReference type="EMBL" id="BX927149">
    <property type="protein sequence ID" value="CAF19210.1"/>
    <property type="molecule type" value="Genomic_DNA"/>
</dbReference>
<dbReference type="RefSeq" id="NP_599741.1">
    <property type="nucleotide sequence ID" value="NC_003450.3"/>
</dbReference>
<dbReference type="RefSeq" id="WP_011013696.1">
    <property type="nucleotide sequence ID" value="NC_006958.1"/>
</dbReference>
<dbReference type="SMR" id="P42439"/>
<dbReference type="STRING" id="196627.cg0587"/>
<dbReference type="GeneID" id="1021503"/>
<dbReference type="KEGG" id="cgb:cg0587"/>
<dbReference type="KEGG" id="cgl:Cgl0497"/>
<dbReference type="PATRIC" id="fig|196627.13.peg.496"/>
<dbReference type="eggNOG" id="COG0050">
    <property type="taxonomic scope" value="Bacteria"/>
</dbReference>
<dbReference type="HOGENOM" id="CLU_007265_0_1_11"/>
<dbReference type="OrthoDB" id="9803139at2"/>
<dbReference type="BioCyc" id="CORYNE:G18NG-10059-MONOMER"/>
<dbReference type="Proteomes" id="UP000000582">
    <property type="component" value="Chromosome"/>
</dbReference>
<dbReference type="Proteomes" id="UP000001009">
    <property type="component" value="Chromosome"/>
</dbReference>
<dbReference type="GO" id="GO:0005829">
    <property type="term" value="C:cytosol"/>
    <property type="evidence" value="ECO:0007669"/>
    <property type="project" value="TreeGrafter"/>
</dbReference>
<dbReference type="GO" id="GO:0005525">
    <property type="term" value="F:GTP binding"/>
    <property type="evidence" value="ECO:0007669"/>
    <property type="project" value="UniProtKB-UniRule"/>
</dbReference>
<dbReference type="GO" id="GO:0003924">
    <property type="term" value="F:GTPase activity"/>
    <property type="evidence" value="ECO:0007669"/>
    <property type="project" value="InterPro"/>
</dbReference>
<dbReference type="GO" id="GO:0003746">
    <property type="term" value="F:translation elongation factor activity"/>
    <property type="evidence" value="ECO:0007669"/>
    <property type="project" value="UniProtKB-UniRule"/>
</dbReference>
<dbReference type="CDD" id="cd01884">
    <property type="entry name" value="EF_Tu"/>
    <property type="match status" value="1"/>
</dbReference>
<dbReference type="CDD" id="cd03697">
    <property type="entry name" value="EFTU_II"/>
    <property type="match status" value="1"/>
</dbReference>
<dbReference type="CDD" id="cd03707">
    <property type="entry name" value="EFTU_III"/>
    <property type="match status" value="1"/>
</dbReference>
<dbReference type="FunFam" id="2.40.30.10:FF:000001">
    <property type="entry name" value="Elongation factor Tu"/>
    <property type="match status" value="1"/>
</dbReference>
<dbReference type="FunFam" id="3.40.50.300:FF:000003">
    <property type="entry name" value="Elongation factor Tu"/>
    <property type="match status" value="1"/>
</dbReference>
<dbReference type="Gene3D" id="3.40.50.300">
    <property type="entry name" value="P-loop containing nucleotide triphosphate hydrolases"/>
    <property type="match status" value="1"/>
</dbReference>
<dbReference type="Gene3D" id="2.40.30.10">
    <property type="entry name" value="Translation factors"/>
    <property type="match status" value="2"/>
</dbReference>
<dbReference type="HAMAP" id="MF_00118_B">
    <property type="entry name" value="EF_Tu_B"/>
    <property type="match status" value="1"/>
</dbReference>
<dbReference type="InterPro" id="IPR041709">
    <property type="entry name" value="EF-Tu_GTP-bd"/>
</dbReference>
<dbReference type="InterPro" id="IPR050055">
    <property type="entry name" value="EF-Tu_GTPase"/>
</dbReference>
<dbReference type="InterPro" id="IPR004161">
    <property type="entry name" value="EFTu-like_2"/>
</dbReference>
<dbReference type="InterPro" id="IPR033720">
    <property type="entry name" value="EFTU_2"/>
</dbReference>
<dbReference type="InterPro" id="IPR031157">
    <property type="entry name" value="G_TR_CS"/>
</dbReference>
<dbReference type="InterPro" id="IPR027417">
    <property type="entry name" value="P-loop_NTPase"/>
</dbReference>
<dbReference type="InterPro" id="IPR005225">
    <property type="entry name" value="Small_GTP-bd"/>
</dbReference>
<dbReference type="InterPro" id="IPR000795">
    <property type="entry name" value="T_Tr_GTP-bd_dom"/>
</dbReference>
<dbReference type="InterPro" id="IPR009000">
    <property type="entry name" value="Transl_B-barrel_sf"/>
</dbReference>
<dbReference type="InterPro" id="IPR009001">
    <property type="entry name" value="Transl_elong_EF1A/Init_IF2_C"/>
</dbReference>
<dbReference type="InterPro" id="IPR004541">
    <property type="entry name" value="Transl_elong_EFTu/EF1A_bac/org"/>
</dbReference>
<dbReference type="InterPro" id="IPR004160">
    <property type="entry name" value="Transl_elong_EFTu/EF1A_C"/>
</dbReference>
<dbReference type="NCBIfam" id="TIGR00485">
    <property type="entry name" value="EF-Tu"/>
    <property type="match status" value="1"/>
</dbReference>
<dbReference type="NCBIfam" id="NF000766">
    <property type="entry name" value="PRK00049.1"/>
    <property type="match status" value="1"/>
</dbReference>
<dbReference type="NCBIfam" id="NF009372">
    <property type="entry name" value="PRK12735.1"/>
    <property type="match status" value="1"/>
</dbReference>
<dbReference type="NCBIfam" id="NF009373">
    <property type="entry name" value="PRK12736.1"/>
    <property type="match status" value="1"/>
</dbReference>
<dbReference type="NCBIfam" id="TIGR00231">
    <property type="entry name" value="small_GTP"/>
    <property type="match status" value="1"/>
</dbReference>
<dbReference type="PANTHER" id="PTHR43721:SF22">
    <property type="entry name" value="ELONGATION FACTOR TU, MITOCHONDRIAL"/>
    <property type="match status" value="1"/>
</dbReference>
<dbReference type="PANTHER" id="PTHR43721">
    <property type="entry name" value="ELONGATION FACTOR TU-RELATED"/>
    <property type="match status" value="1"/>
</dbReference>
<dbReference type="Pfam" id="PF00009">
    <property type="entry name" value="GTP_EFTU"/>
    <property type="match status" value="1"/>
</dbReference>
<dbReference type="Pfam" id="PF03144">
    <property type="entry name" value="GTP_EFTU_D2"/>
    <property type="match status" value="1"/>
</dbReference>
<dbReference type="Pfam" id="PF03143">
    <property type="entry name" value="GTP_EFTU_D3"/>
    <property type="match status" value="1"/>
</dbReference>
<dbReference type="PRINTS" id="PR00315">
    <property type="entry name" value="ELONGATNFCT"/>
</dbReference>
<dbReference type="SUPFAM" id="SSF50465">
    <property type="entry name" value="EF-Tu/eEF-1alpha/eIF2-gamma C-terminal domain"/>
    <property type="match status" value="1"/>
</dbReference>
<dbReference type="SUPFAM" id="SSF52540">
    <property type="entry name" value="P-loop containing nucleoside triphosphate hydrolases"/>
    <property type="match status" value="1"/>
</dbReference>
<dbReference type="SUPFAM" id="SSF50447">
    <property type="entry name" value="Translation proteins"/>
    <property type="match status" value="1"/>
</dbReference>
<dbReference type="PROSITE" id="PS00301">
    <property type="entry name" value="G_TR_1"/>
    <property type="match status" value="1"/>
</dbReference>
<dbReference type="PROSITE" id="PS51722">
    <property type="entry name" value="G_TR_2"/>
    <property type="match status" value="1"/>
</dbReference>
<sequence>MAKAKFERTKPHVNIGTIGHVDHGKTTTTAAITKVLADTYPELNEAFAFDSIDKAPEEKERGITINISHVEYQTEKRHYAHVDAPGHADYIKNMITGAAQMDGAILVVAATDGPMPQTREHVLLARQVGVPYILVALNKCDMVEDEEIIELVEMEVRELLAEQDYDEEAPIVHISALKALEGDEKWGKQILELMQACDDNIPDPVRETDKPFLMPIEDIFTITGRGTVVTGRVERGTLNVNDDVDIIGIKEKSTSTTVTGIEMFRKLLDSAEAGDNCGLLLRGIKREDVERGQVIVKPGAYTPHTEFEGSVYVLSKDEGGRHTPFFDNYRPQFYFRTTDVTGVVKLPEGTEMVMPGDNVDMSVTLIQPVAMDEGLRFAIREGSRTVGAGRVTKIIK</sequence>
<proteinExistence type="inferred from homology"/>
<organism>
    <name type="scientific">Corynebacterium glutamicum (strain ATCC 13032 / DSM 20300 / JCM 1318 / BCRC 11384 / CCUG 27702 / LMG 3730 / NBRC 12168 / NCIMB 10025 / NRRL B-2784 / 534)</name>
    <dbReference type="NCBI Taxonomy" id="196627"/>
    <lineage>
        <taxon>Bacteria</taxon>
        <taxon>Bacillati</taxon>
        <taxon>Actinomycetota</taxon>
        <taxon>Actinomycetes</taxon>
        <taxon>Mycobacteriales</taxon>
        <taxon>Corynebacteriaceae</taxon>
        <taxon>Corynebacterium</taxon>
    </lineage>
</organism>
<evidence type="ECO:0000250" key="1"/>
<evidence type="ECO:0000255" key="2">
    <source>
        <dbReference type="HAMAP-Rule" id="MF_00118"/>
    </source>
</evidence>
<accession>P42439</accession>
<keyword id="KW-0963">Cytoplasm</keyword>
<keyword id="KW-0251">Elongation factor</keyword>
<keyword id="KW-0342">GTP-binding</keyword>
<keyword id="KW-0378">Hydrolase</keyword>
<keyword id="KW-0460">Magnesium</keyword>
<keyword id="KW-0479">Metal-binding</keyword>
<keyword id="KW-0547">Nucleotide-binding</keyword>
<keyword id="KW-0648">Protein biosynthesis</keyword>
<keyword id="KW-1185">Reference proteome</keyword>
<protein>
    <recommendedName>
        <fullName evidence="2">Elongation factor Tu</fullName>
        <shortName evidence="2">EF-Tu</shortName>
        <ecNumber evidence="2">3.6.5.3</ecNumber>
    </recommendedName>
</protein>
<name>EFTU_CORGL</name>